<proteinExistence type="inferred from homology"/>
<sequence length="339" mass="37946">MSSSSSSGAATGFAVCSDPQKSFSKMFKRTVILLAGPTGSGKTAVSLKLAPLVDGEIISVDSMQVYQGMDIGTAKVSLADRKEVPHHLIDVCHVQESFNAVDFYYHAVQACQDILSRNKVPILVGGTGFYFHTFLSGPPSGPSPDFVLREQLTLEAQERGISALYQELELLDPVYAATITKHDKNKIIRALEIIRKTGSKVSSYAWQSTVNESKEYHCRGWLLSPDPELLRHNILERCDQMLEEGLLDEVQALLAAGIKGNSSASRAIGYREWIEFLDLGSPPDLFEITKQKFITNTWRYTKKQRTWFKRYSLFRELRPMGMTLDDMAKKIAQDYFLCG</sequence>
<feature type="chain" id="PRO_0000377113" description="tRNA dimethylallyltransferase">
    <location>
        <begin position="1"/>
        <end position="339"/>
    </location>
</feature>
<feature type="region of interest" description="Interaction with substrate tRNA" evidence="1">
    <location>
        <begin position="61"/>
        <end position="64"/>
    </location>
</feature>
<feature type="binding site" evidence="1">
    <location>
        <begin position="36"/>
        <end position="43"/>
    </location>
    <ligand>
        <name>ATP</name>
        <dbReference type="ChEBI" id="CHEBI:30616"/>
    </ligand>
</feature>
<feature type="binding site" evidence="1">
    <location>
        <begin position="38"/>
        <end position="43"/>
    </location>
    <ligand>
        <name>substrate</name>
    </ligand>
</feature>
<feature type="site" description="Interaction with substrate tRNA" evidence="1">
    <location>
        <position position="127"/>
    </location>
</feature>
<feature type="site" description="Interaction with substrate tRNA" evidence="1">
    <location>
        <position position="149"/>
    </location>
</feature>
<evidence type="ECO:0000255" key="1">
    <source>
        <dbReference type="HAMAP-Rule" id="MF_00185"/>
    </source>
</evidence>
<name>MIAA_CHLTB</name>
<gene>
    <name evidence="1" type="primary">miaA</name>
    <name type="ordered locus">CTLon_0135</name>
</gene>
<accession>B0BAM1</accession>
<organism>
    <name type="scientific">Chlamydia trachomatis serovar L2b (strain UCH-1/proctitis)</name>
    <dbReference type="NCBI Taxonomy" id="471473"/>
    <lineage>
        <taxon>Bacteria</taxon>
        <taxon>Pseudomonadati</taxon>
        <taxon>Chlamydiota</taxon>
        <taxon>Chlamydiia</taxon>
        <taxon>Chlamydiales</taxon>
        <taxon>Chlamydiaceae</taxon>
        <taxon>Chlamydia/Chlamydophila group</taxon>
        <taxon>Chlamydia</taxon>
    </lineage>
</organism>
<comment type="function">
    <text evidence="1">Catalyzes the transfer of a dimethylallyl group onto the adenine at position 37 in tRNAs that read codons beginning with uridine, leading to the formation of N6-(dimethylallyl)adenosine (i(6)A).</text>
</comment>
<comment type="catalytic activity">
    <reaction evidence="1">
        <text>adenosine(37) in tRNA + dimethylallyl diphosphate = N(6)-dimethylallyladenosine(37) in tRNA + diphosphate</text>
        <dbReference type="Rhea" id="RHEA:26482"/>
        <dbReference type="Rhea" id="RHEA-COMP:10162"/>
        <dbReference type="Rhea" id="RHEA-COMP:10375"/>
        <dbReference type="ChEBI" id="CHEBI:33019"/>
        <dbReference type="ChEBI" id="CHEBI:57623"/>
        <dbReference type="ChEBI" id="CHEBI:74411"/>
        <dbReference type="ChEBI" id="CHEBI:74415"/>
        <dbReference type="EC" id="2.5.1.75"/>
    </reaction>
</comment>
<comment type="cofactor">
    <cofactor evidence="1">
        <name>Mg(2+)</name>
        <dbReference type="ChEBI" id="CHEBI:18420"/>
    </cofactor>
</comment>
<comment type="subunit">
    <text evidence="1">Monomer.</text>
</comment>
<comment type="similarity">
    <text evidence="1">Belongs to the IPP transferase family.</text>
</comment>
<dbReference type="EC" id="2.5.1.75" evidence="1"/>
<dbReference type="EMBL" id="AM884177">
    <property type="protein sequence ID" value="CAP06533.1"/>
    <property type="molecule type" value="Genomic_DNA"/>
</dbReference>
<dbReference type="RefSeq" id="WP_009872913.1">
    <property type="nucleotide sequence ID" value="NC_010280.2"/>
</dbReference>
<dbReference type="SMR" id="B0BAM1"/>
<dbReference type="KEGG" id="ctl:CTLon_0135"/>
<dbReference type="HOGENOM" id="CLU_032616_0_2_0"/>
<dbReference type="Proteomes" id="UP001154401">
    <property type="component" value="Chromosome"/>
</dbReference>
<dbReference type="GO" id="GO:0005524">
    <property type="term" value="F:ATP binding"/>
    <property type="evidence" value="ECO:0007669"/>
    <property type="project" value="UniProtKB-UniRule"/>
</dbReference>
<dbReference type="GO" id="GO:0052381">
    <property type="term" value="F:tRNA dimethylallyltransferase activity"/>
    <property type="evidence" value="ECO:0007669"/>
    <property type="project" value="UniProtKB-UniRule"/>
</dbReference>
<dbReference type="GO" id="GO:0006400">
    <property type="term" value="P:tRNA modification"/>
    <property type="evidence" value="ECO:0007669"/>
    <property type="project" value="TreeGrafter"/>
</dbReference>
<dbReference type="Gene3D" id="1.10.20.140">
    <property type="match status" value="1"/>
</dbReference>
<dbReference type="Gene3D" id="3.40.50.300">
    <property type="entry name" value="P-loop containing nucleotide triphosphate hydrolases"/>
    <property type="match status" value="1"/>
</dbReference>
<dbReference type="HAMAP" id="MF_00185">
    <property type="entry name" value="IPP_trans"/>
    <property type="match status" value="1"/>
</dbReference>
<dbReference type="InterPro" id="IPR039657">
    <property type="entry name" value="Dimethylallyltransferase"/>
</dbReference>
<dbReference type="InterPro" id="IPR018022">
    <property type="entry name" value="IPT"/>
</dbReference>
<dbReference type="InterPro" id="IPR027417">
    <property type="entry name" value="P-loop_NTPase"/>
</dbReference>
<dbReference type="NCBIfam" id="TIGR00174">
    <property type="entry name" value="miaA"/>
    <property type="match status" value="1"/>
</dbReference>
<dbReference type="PANTHER" id="PTHR11088">
    <property type="entry name" value="TRNA DIMETHYLALLYLTRANSFERASE"/>
    <property type="match status" value="1"/>
</dbReference>
<dbReference type="PANTHER" id="PTHR11088:SF60">
    <property type="entry name" value="TRNA DIMETHYLALLYLTRANSFERASE"/>
    <property type="match status" value="1"/>
</dbReference>
<dbReference type="Pfam" id="PF01715">
    <property type="entry name" value="IPPT"/>
    <property type="match status" value="1"/>
</dbReference>
<dbReference type="SUPFAM" id="SSF52540">
    <property type="entry name" value="P-loop containing nucleoside triphosphate hydrolases"/>
    <property type="match status" value="2"/>
</dbReference>
<reference key="1">
    <citation type="journal article" date="2008" name="Genome Res.">
        <title>Chlamydia trachomatis: genome sequence analysis of lymphogranuloma venereum isolates.</title>
        <authorList>
            <person name="Thomson N.R."/>
            <person name="Holden M.T.G."/>
            <person name="Carder C."/>
            <person name="Lennard N."/>
            <person name="Lockey S.J."/>
            <person name="Marsh P."/>
            <person name="Skipp P."/>
            <person name="O'Connor C.D."/>
            <person name="Goodhead I."/>
            <person name="Norbertzcak H."/>
            <person name="Harris B."/>
            <person name="Ormond D."/>
            <person name="Rance R."/>
            <person name="Quail M.A."/>
            <person name="Parkhill J."/>
            <person name="Stephens R.S."/>
            <person name="Clarke I.N."/>
        </authorList>
    </citation>
    <scope>NUCLEOTIDE SEQUENCE [LARGE SCALE GENOMIC DNA]</scope>
    <source>
        <strain>UCH-1/proctitis</strain>
    </source>
</reference>
<keyword id="KW-0067">ATP-binding</keyword>
<keyword id="KW-0460">Magnesium</keyword>
<keyword id="KW-0547">Nucleotide-binding</keyword>
<keyword id="KW-0808">Transferase</keyword>
<keyword id="KW-0819">tRNA processing</keyword>
<protein>
    <recommendedName>
        <fullName evidence="1">tRNA dimethylallyltransferase</fullName>
        <ecNumber evidence="1">2.5.1.75</ecNumber>
    </recommendedName>
    <alternativeName>
        <fullName evidence="1">Dimethylallyl diphosphate:tRNA dimethylallyltransferase</fullName>
        <shortName evidence="1">DMAPP:tRNA dimethylallyltransferase</shortName>
        <shortName evidence="1">DMATase</shortName>
    </alternativeName>
    <alternativeName>
        <fullName evidence="1">Isopentenyl-diphosphate:tRNA isopentenyltransferase</fullName>
        <shortName evidence="1">IPP transferase</shortName>
        <shortName evidence="1">IPPT</shortName>
        <shortName evidence="1">IPTase</shortName>
    </alternativeName>
</protein>